<protein>
    <recommendedName>
        <fullName evidence="1">Crossover junction endodeoxyribonuclease RuvC</fullName>
        <ecNumber evidence="1">3.1.21.10</ecNumber>
    </recommendedName>
    <alternativeName>
        <fullName evidence="1">Holliday junction nuclease RuvC</fullName>
    </alternativeName>
    <alternativeName>
        <fullName evidence="1">Holliday junction resolvase RuvC</fullName>
    </alternativeName>
</protein>
<reference key="1">
    <citation type="journal article" date="2009" name="Proc. Natl. Acad. Sci. U.S.A.">
        <title>The mosaic genome structure of the Wolbachia wRi strain infecting Drosophila simulans.</title>
        <authorList>
            <person name="Klasson L."/>
            <person name="Westberg J."/>
            <person name="Sapountzis P."/>
            <person name="Naeslund K."/>
            <person name="Lutnaes Y."/>
            <person name="Darby A.C."/>
            <person name="Veneti Z."/>
            <person name="Chen L."/>
            <person name="Braig H.R."/>
            <person name="Garrett R."/>
            <person name="Bourtzis K."/>
            <person name="Andersson S.G."/>
        </authorList>
    </citation>
    <scope>NUCLEOTIDE SEQUENCE [LARGE SCALE GENOMIC DNA]</scope>
    <source>
        <strain>wRi</strain>
    </source>
</reference>
<dbReference type="EC" id="3.1.21.10" evidence="1"/>
<dbReference type="EMBL" id="CP001391">
    <property type="protein sequence ID" value="ACN94965.1"/>
    <property type="molecule type" value="Genomic_DNA"/>
</dbReference>
<dbReference type="RefSeq" id="WP_012673062.1">
    <property type="nucleotide sequence ID" value="NZ_MKIF01000090.1"/>
</dbReference>
<dbReference type="SMR" id="C0R5C3"/>
<dbReference type="STRING" id="66084.WRi_001110"/>
<dbReference type="KEGG" id="wri:WRi_001110"/>
<dbReference type="HOGENOM" id="CLU_091257_1_0_5"/>
<dbReference type="Proteomes" id="UP000001293">
    <property type="component" value="Chromosome"/>
</dbReference>
<dbReference type="GO" id="GO:0005737">
    <property type="term" value="C:cytoplasm"/>
    <property type="evidence" value="ECO:0007669"/>
    <property type="project" value="UniProtKB-SubCell"/>
</dbReference>
<dbReference type="GO" id="GO:0048476">
    <property type="term" value="C:Holliday junction resolvase complex"/>
    <property type="evidence" value="ECO:0007669"/>
    <property type="project" value="UniProtKB-UniRule"/>
</dbReference>
<dbReference type="GO" id="GO:0008821">
    <property type="term" value="F:crossover junction DNA endonuclease activity"/>
    <property type="evidence" value="ECO:0007669"/>
    <property type="project" value="UniProtKB-UniRule"/>
</dbReference>
<dbReference type="GO" id="GO:0003677">
    <property type="term" value="F:DNA binding"/>
    <property type="evidence" value="ECO:0007669"/>
    <property type="project" value="UniProtKB-KW"/>
</dbReference>
<dbReference type="GO" id="GO:0000287">
    <property type="term" value="F:magnesium ion binding"/>
    <property type="evidence" value="ECO:0007669"/>
    <property type="project" value="UniProtKB-UniRule"/>
</dbReference>
<dbReference type="GO" id="GO:0006310">
    <property type="term" value="P:DNA recombination"/>
    <property type="evidence" value="ECO:0007669"/>
    <property type="project" value="UniProtKB-UniRule"/>
</dbReference>
<dbReference type="GO" id="GO:0006281">
    <property type="term" value="P:DNA repair"/>
    <property type="evidence" value="ECO:0007669"/>
    <property type="project" value="UniProtKB-UniRule"/>
</dbReference>
<dbReference type="CDD" id="cd16962">
    <property type="entry name" value="RuvC"/>
    <property type="match status" value="1"/>
</dbReference>
<dbReference type="FunFam" id="3.30.420.10:FF:000002">
    <property type="entry name" value="Crossover junction endodeoxyribonuclease RuvC"/>
    <property type="match status" value="1"/>
</dbReference>
<dbReference type="Gene3D" id="3.30.420.10">
    <property type="entry name" value="Ribonuclease H-like superfamily/Ribonuclease H"/>
    <property type="match status" value="1"/>
</dbReference>
<dbReference type="HAMAP" id="MF_00034">
    <property type="entry name" value="RuvC"/>
    <property type="match status" value="1"/>
</dbReference>
<dbReference type="InterPro" id="IPR012337">
    <property type="entry name" value="RNaseH-like_sf"/>
</dbReference>
<dbReference type="InterPro" id="IPR036397">
    <property type="entry name" value="RNaseH_sf"/>
</dbReference>
<dbReference type="InterPro" id="IPR002176">
    <property type="entry name" value="X-over_junc_endoDNase_RuvC"/>
</dbReference>
<dbReference type="NCBIfam" id="TIGR00228">
    <property type="entry name" value="ruvC"/>
    <property type="match status" value="1"/>
</dbReference>
<dbReference type="PANTHER" id="PTHR30194">
    <property type="entry name" value="CROSSOVER JUNCTION ENDODEOXYRIBONUCLEASE RUVC"/>
    <property type="match status" value="1"/>
</dbReference>
<dbReference type="PANTHER" id="PTHR30194:SF3">
    <property type="entry name" value="CROSSOVER JUNCTION ENDODEOXYRIBONUCLEASE RUVC"/>
    <property type="match status" value="1"/>
</dbReference>
<dbReference type="Pfam" id="PF02075">
    <property type="entry name" value="RuvC"/>
    <property type="match status" value="1"/>
</dbReference>
<dbReference type="PRINTS" id="PR00696">
    <property type="entry name" value="RSOLVASERUVC"/>
</dbReference>
<dbReference type="SUPFAM" id="SSF53098">
    <property type="entry name" value="Ribonuclease H-like"/>
    <property type="match status" value="1"/>
</dbReference>
<proteinExistence type="inferred from homology"/>
<evidence type="ECO:0000255" key="1">
    <source>
        <dbReference type="HAMAP-Rule" id="MF_00034"/>
    </source>
</evidence>
<accession>C0R5C3</accession>
<name>RUVC_WOLWR</name>
<sequence>MVKIIGLDPGISKTGWAIISLNEKNNIEFLGGGTISTDGKLGTGERLHIIFEQLKKVISLYSPNEAAVEKIFVNKNPKSSLTLGYARGVVILALKITKLTMNEYDANYVKKSITGNGHADKDQIIFMVKQIVKNLNIKCHHAADALAVAICHAYTKGSCFVE</sequence>
<gene>
    <name evidence="1" type="primary">ruvC</name>
    <name type="ordered locus">WRi_001110</name>
</gene>
<comment type="function">
    <text evidence="1">The RuvA-RuvB-RuvC complex processes Holliday junction (HJ) DNA during genetic recombination and DNA repair. Endonuclease that resolves HJ intermediates. Cleaves cruciform DNA by making single-stranded nicks across the HJ at symmetrical positions within the homologous arms, yielding a 5'-phosphate and a 3'-hydroxyl group; requires a central core of homology in the junction. The consensus cleavage sequence is 5'-(A/T)TT(C/G)-3'. Cleavage occurs on the 3'-side of the TT dinucleotide at the point of strand exchange. HJ branch migration catalyzed by RuvA-RuvB allows RuvC to scan DNA until it finds its consensus sequence, where it cleaves and resolves the cruciform DNA.</text>
</comment>
<comment type="catalytic activity">
    <reaction evidence="1">
        <text>Endonucleolytic cleavage at a junction such as a reciprocal single-stranded crossover between two homologous DNA duplexes (Holliday junction).</text>
        <dbReference type="EC" id="3.1.21.10"/>
    </reaction>
</comment>
<comment type="cofactor">
    <cofactor evidence="1">
        <name>Mg(2+)</name>
        <dbReference type="ChEBI" id="CHEBI:18420"/>
    </cofactor>
    <text evidence="1">Binds 2 Mg(2+) ion per subunit.</text>
</comment>
<comment type="subunit">
    <text evidence="1">Homodimer which binds Holliday junction (HJ) DNA. The HJ becomes 2-fold symmetrical on binding to RuvC with unstacked arms; it has a different conformation from HJ DNA in complex with RuvA. In the full resolvosome a probable DNA-RuvA(4)-RuvB(12)-RuvC(2) complex forms which resolves the HJ.</text>
</comment>
<comment type="subcellular location">
    <subcellularLocation>
        <location evidence="1">Cytoplasm</location>
    </subcellularLocation>
</comment>
<comment type="similarity">
    <text evidence="1">Belongs to the RuvC family.</text>
</comment>
<organism>
    <name type="scientific">Wolbachia sp. subsp. Drosophila simulans (strain wRi)</name>
    <dbReference type="NCBI Taxonomy" id="66084"/>
    <lineage>
        <taxon>Bacteria</taxon>
        <taxon>Pseudomonadati</taxon>
        <taxon>Pseudomonadota</taxon>
        <taxon>Alphaproteobacteria</taxon>
        <taxon>Rickettsiales</taxon>
        <taxon>Anaplasmataceae</taxon>
        <taxon>Wolbachieae</taxon>
        <taxon>Wolbachia</taxon>
    </lineage>
</organism>
<keyword id="KW-0963">Cytoplasm</keyword>
<keyword id="KW-0227">DNA damage</keyword>
<keyword id="KW-0233">DNA recombination</keyword>
<keyword id="KW-0234">DNA repair</keyword>
<keyword id="KW-0238">DNA-binding</keyword>
<keyword id="KW-0255">Endonuclease</keyword>
<keyword id="KW-0378">Hydrolase</keyword>
<keyword id="KW-0460">Magnesium</keyword>
<keyword id="KW-0479">Metal-binding</keyword>
<keyword id="KW-0540">Nuclease</keyword>
<feature type="chain" id="PRO_1000195278" description="Crossover junction endodeoxyribonuclease RuvC">
    <location>
        <begin position="1"/>
        <end position="162"/>
    </location>
</feature>
<feature type="active site" evidence="1">
    <location>
        <position position="8"/>
    </location>
</feature>
<feature type="active site" evidence="1">
    <location>
        <position position="69"/>
    </location>
</feature>
<feature type="active site" evidence="1">
    <location>
        <position position="141"/>
    </location>
</feature>
<feature type="binding site" evidence="1">
    <location>
        <position position="8"/>
    </location>
    <ligand>
        <name>Mg(2+)</name>
        <dbReference type="ChEBI" id="CHEBI:18420"/>
        <label>1</label>
    </ligand>
</feature>
<feature type="binding site" evidence="1">
    <location>
        <position position="69"/>
    </location>
    <ligand>
        <name>Mg(2+)</name>
        <dbReference type="ChEBI" id="CHEBI:18420"/>
        <label>2</label>
    </ligand>
</feature>
<feature type="binding site" evidence="1">
    <location>
        <position position="141"/>
    </location>
    <ligand>
        <name>Mg(2+)</name>
        <dbReference type="ChEBI" id="CHEBI:18420"/>
        <label>1</label>
    </ligand>
</feature>